<gene>
    <name evidence="1" type="primary">rplN</name>
    <name type="ordered locus">GK0116</name>
</gene>
<name>RL14_GEOKA</name>
<protein>
    <recommendedName>
        <fullName evidence="1">Large ribosomal subunit protein uL14</fullName>
    </recommendedName>
    <alternativeName>
        <fullName evidence="2">50S ribosomal protein L14</fullName>
    </alternativeName>
</protein>
<accession>Q5L413</accession>
<feature type="chain" id="PRO_0000266488" description="Large ribosomal subunit protein uL14">
    <location>
        <begin position="1"/>
        <end position="122"/>
    </location>
</feature>
<reference key="1">
    <citation type="journal article" date="2004" name="Nucleic Acids Res.">
        <title>Thermoadaptation trait revealed by the genome sequence of thermophilic Geobacillus kaustophilus.</title>
        <authorList>
            <person name="Takami H."/>
            <person name="Takaki Y."/>
            <person name="Chee G.-J."/>
            <person name="Nishi S."/>
            <person name="Shimamura S."/>
            <person name="Suzuki H."/>
            <person name="Matsui S."/>
            <person name="Uchiyama I."/>
        </authorList>
    </citation>
    <scope>NUCLEOTIDE SEQUENCE [LARGE SCALE GENOMIC DNA]</scope>
    <source>
        <strain>HTA426</strain>
    </source>
</reference>
<proteinExistence type="evidence at protein level"/>
<keyword id="KW-0002">3D-structure</keyword>
<keyword id="KW-1185">Reference proteome</keyword>
<keyword id="KW-0687">Ribonucleoprotein</keyword>
<keyword id="KW-0689">Ribosomal protein</keyword>
<keyword id="KW-0694">RNA-binding</keyword>
<keyword id="KW-0699">rRNA-binding</keyword>
<dbReference type="EMBL" id="BA000043">
    <property type="protein sequence ID" value="BAD74401.1"/>
    <property type="molecule type" value="Genomic_DNA"/>
</dbReference>
<dbReference type="RefSeq" id="WP_011229630.1">
    <property type="nucleotide sequence ID" value="NC_006510.1"/>
</dbReference>
<dbReference type="PDB" id="4V4R">
    <property type="method" value="X-ray"/>
    <property type="resolution" value="5.90 A"/>
    <property type="chains" value="BO=1-122"/>
</dbReference>
<dbReference type="PDB" id="4V4S">
    <property type="method" value="X-ray"/>
    <property type="resolution" value="6.76 A"/>
    <property type="chains" value="BO=1-122"/>
</dbReference>
<dbReference type="PDB" id="4V4T">
    <property type="method" value="X-ray"/>
    <property type="resolution" value="6.46 A"/>
    <property type="chains" value="BO=1-122"/>
</dbReference>
<dbReference type="PDBsum" id="4V4R"/>
<dbReference type="PDBsum" id="4V4S"/>
<dbReference type="PDBsum" id="4V4T"/>
<dbReference type="SMR" id="Q5L413"/>
<dbReference type="STRING" id="235909.GK0116"/>
<dbReference type="GeneID" id="89612890"/>
<dbReference type="KEGG" id="gka:GK0116"/>
<dbReference type="eggNOG" id="COG0093">
    <property type="taxonomic scope" value="Bacteria"/>
</dbReference>
<dbReference type="HOGENOM" id="CLU_095071_2_1_9"/>
<dbReference type="Proteomes" id="UP000001172">
    <property type="component" value="Chromosome"/>
</dbReference>
<dbReference type="GO" id="GO:0022625">
    <property type="term" value="C:cytosolic large ribosomal subunit"/>
    <property type="evidence" value="ECO:0007669"/>
    <property type="project" value="TreeGrafter"/>
</dbReference>
<dbReference type="GO" id="GO:0070180">
    <property type="term" value="F:large ribosomal subunit rRNA binding"/>
    <property type="evidence" value="ECO:0007669"/>
    <property type="project" value="TreeGrafter"/>
</dbReference>
<dbReference type="GO" id="GO:0003735">
    <property type="term" value="F:structural constituent of ribosome"/>
    <property type="evidence" value="ECO:0007669"/>
    <property type="project" value="InterPro"/>
</dbReference>
<dbReference type="GO" id="GO:0006412">
    <property type="term" value="P:translation"/>
    <property type="evidence" value="ECO:0007669"/>
    <property type="project" value="UniProtKB-UniRule"/>
</dbReference>
<dbReference type="CDD" id="cd00337">
    <property type="entry name" value="Ribosomal_uL14"/>
    <property type="match status" value="1"/>
</dbReference>
<dbReference type="FunFam" id="2.40.150.20:FF:000001">
    <property type="entry name" value="50S ribosomal protein L14"/>
    <property type="match status" value="1"/>
</dbReference>
<dbReference type="Gene3D" id="2.40.150.20">
    <property type="entry name" value="Ribosomal protein L14"/>
    <property type="match status" value="1"/>
</dbReference>
<dbReference type="HAMAP" id="MF_01367">
    <property type="entry name" value="Ribosomal_uL14"/>
    <property type="match status" value="1"/>
</dbReference>
<dbReference type="InterPro" id="IPR000218">
    <property type="entry name" value="Ribosomal_uL14"/>
</dbReference>
<dbReference type="InterPro" id="IPR005745">
    <property type="entry name" value="Ribosomal_uL14_bac-type"/>
</dbReference>
<dbReference type="InterPro" id="IPR019972">
    <property type="entry name" value="Ribosomal_uL14_CS"/>
</dbReference>
<dbReference type="InterPro" id="IPR036853">
    <property type="entry name" value="Ribosomal_uL14_sf"/>
</dbReference>
<dbReference type="NCBIfam" id="TIGR01067">
    <property type="entry name" value="rplN_bact"/>
    <property type="match status" value="1"/>
</dbReference>
<dbReference type="PANTHER" id="PTHR11761">
    <property type="entry name" value="50S/60S RIBOSOMAL PROTEIN L14/L23"/>
    <property type="match status" value="1"/>
</dbReference>
<dbReference type="PANTHER" id="PTHR11761:SF3">
    <property type="entry name" value="LARGE RIBOSOMAL SUBUNIT PROTEIN UL14M"/>
    <property type="match status" value="1"/>
</dbReference>
<dbReference type="Pfam" id="PF00238">
    <property type="entry name" value="Ribosomal_L14"/>
    <property type="match status" value="1"/>
</dbReference>
<dbReference type="SMART" id="SM01374">
    <property type="entry name" value="Ribosomal_L14"/>
    <property type="match status" value="1"/>
</dbReference>
<dbReference type="SUPFAM" id="SSF50193">
    <property type="entry name" value="Ribosomal protein L14"/>
    <property type="match status" value="1"/>
</dbReference>
<dbReference type="PROSITE" id="PS00049">
    <property type="entry name" value="RIBOSOMAL_L14"/>
    <property type="match status" value="1"/>
</dbReference>
<organism>
    <name type="scientific">Geobacillus kaustophilus (strain HTA426)</name>
    <dbReference type="NCBI Taxonomy" id="235909"/>
    <lineage>
        <taxon>Bacteria</taxon>
        <taxon>Bacillati</taxon>
        <taxon>Bacillota</taxon>
        <taxon>Bacilli</taxon>
        <taxon>Bacillales</taxon>
        <taxon>Anoxybacillaceae</taxon>
        <taxon>Geobacillus</taxon>
        <taxon>Geobacillus thermoleovorans group</taxon>
    </lineage>
</organism>
<comment type="function">
    <text evidence="1">Binds to 23S rRNA. Forms part of two intersubunit bridges in the 70S ribosome.</text>
</comment>
<comment type="subunit">
    <text evidence="1">Part of the 50S ribosomal subunit. Forms a cluster with proteins L3 and L19. In the 70S ribosome, L14 and L19 interact and together make contacts with the 16S rRNA in bridges B5 and B8.</text>
</comment>
<comment type="similarity">
    <text evidence="1">Belongs to the universal ribosomal protein uL14 family.</text>
</comment>
<evidence type="ECO:0000255" key="1">
    <source>
        <dbReference type="HAMAP-Rule" id="MF_01367"/>
    </source>
</evidence>
<evidence type="ECO:0000305" key="2"/>
<sequence length="122" mass="13346">MIQQESRLKVADNSGAREVLVIKVLGGSGRRYANIGDVVVATVKDATPGGVVKKGQVVKAVVVRTKRGVRRPDGSYIRFDENACVIIRDDKSPRGTRIFGPVARELRDKDFMKIISLAPEVI</sequence>